<evidence type="ECO:0000250" key="1"/>
<evidence type="ECO:0000305" key="2"/>
<dbReference type="EMBL" id="DQ821119">
    <property type="protein sequence ID" value="ABG79657.1"/>
    <property type="molecule type" value="Genomic_DNA"/>
</dbReference>
<dbReference type="RefSeq" id="YP_001023758.1">
    <property type="nucleotide sequence ID" value="NC_008829.1"/>
</dbReference>
<dbReference type="SMR" id="A2T390"/>
<dbReference type="GeneID" id="4788151"/>
<dbReference type="GO" id="GO:0009507">
    <property type="term" value="C:chloroplast"/>
    <property type="evidence" value="ECO:0007669"/>
    <property type="project" value="UniProtKB-SubCell"/>
</dbReference>
<dbReference type="GO" id="GO:1990904">
    <property type="term" value="C:ribonucleoprotein complex"/>
    <property type="evidence" value="ECO:0007669"/>
    <property type="project" value="UniProtKB-KW"/>
</dbReference>
<dbReference type="GO" id="GO:0005840">
    <property type="term" value="C:ribosome"/>
    <property type="evidence" value="ECO:0007669"/>
    <property type="project" value="UniProtKB-KW"/>
</dbReference>
<dbReference type="GO" id="GO:0003735">
    <property type="term" value="F:structural constituent of ribosome"/>
    <property type="evidence" value="ECO:0007669"/>
    <property type="project" value="InterPro"/>
</dbReference>
<dbReference type="GO" id="GO:0006412">
    <property type="term" value="P:translation"/>
    <property type="evidence" value="ECO:0007669"/>
    <property type="project" value="UniProtKB-UniRule"/>
</dbReference>
<dbReference type="CDD" id="cd00677">
    <property type="entry name" value="S15_NS1_EPRS_RNA-bind"/>
    <property type="match status" value="1"/>
</dbReference>
<dbReference type="Gene3D" id="1.10.287.10">
    <property type="entry name" value="S15/NS1, RNA-binding"/>
    <property type="match status" value="1"/>
</dbReference>
<dbReference type="HAMAP" id="MF_01343_B">
    <property type="entry name" value="Ribosomal_uS15_B"/>
    <property type="match status" value="1"/>
</dbReference>
<dbReference type="InterPro" id="IPR000589">
    <property type="entry name" value="Ribosomal_uS15"/>
</dbReference>
<dbReference type="InterPro" id="IPR005290">
    <property type="entry name" value="Ribosomal_uS15_bac-type"/>
</dbReference>
<dbReference type="InterPro" id="IPR009068">
    <property type="entry name" value="uS15_NS1_RNA-bd_sf"/>
</dbReference>
<dbReference type="NCBIfam" id="TIGR00952">
    <property type="entry name" value="S15_bact"/>
    <property type="match status" value="1"/>
</dbReference>
<dbReference type="PANTHER" id="PTHR23321">
    <property type="entry name" value="RIBOSOMAL PROTEIN S15, BACTERIAL AND ORGANELLAR"/>
    <property type="match status" value="1"/>
</dbReference>
<dbReference type="PANTHER" id="PTHR23321:SF26">
    <property type="entry name" value="SMALL RIBOSOMAL SUBUNIT PROTEIN US15M"/>
    <property type="match status" value="1"/>
</dbReference>
<dbReference type="Pfam" id="PF00312">
    <property type="entry name" value="Ribosomal_S15"/>
    <property type="match status" value="1"/>
</dbReference>
<dbReference type="SMART" id="SM01387">
    <property type="entry name" value="Ribosomal_S15"/>
    <property type="match status" value="1"/>
</dbReference>
<dbReference type="SUPFAM" id="SSF47060">
    <property type="entry name" value="S15/NS1 RNA-binding domain"/>
    <property type="match status" value="1"/>
</dbReference>
<geneLocation type="chloroplast"/>
<protein>
    <recommendedName>
        <fullName evidence="2">Small ribosomal subunit protein uS15c</fullName>
    </recommendedName>
    <alternativeName>
        <fullName>30S ribosomal protein S15, chloroplastic</fullName>
    </alternativeName>
</protein>
<gene>
    <name type="primary">rps15</name>
</gene>
<organism>
    <name type="scientific">Angiopteris evecta</name>
    <name type="common">Mule's foot fern</name>
    <name type="synonym">Polypodium evectum</name>
    <dbReference type="NCBI Taxonomy" id="13825"/>
    <lineage>
        <taxon>Eukaryota</taxon>
        <taxon>Viridiplantae</taxon>
        <taxon>Streptophyta</taxon>
        <taxon>Embryophyta</taxon>
        <taxon>Tracheophyta</taxon>
        <taxon>Polypodiopsida</taxon>
        <taxon>Marattiidae</taxon>
        <taxon>Marattiales</taxon>
        <taxon>Marattiaceae</taxon>
        <taxon>Angiopteris</taxon>
    </lineage>
</organism>
<comment type="subunit">
    <text evidence="1">Part of the 30S ribosomal subunit.</text>
</comment>
<comment type="subcellular location">
    <subcellularLocation>
        <location>Plastid</location>
        <location>Chloroplast</location>
    </subcellularLocation>
</comment>
<comment type="similarity">
    <text evidence="2">Belongs to the universal ribosomal protein uS15 family.</text>
</comment>
<sequence length="88" mass="10211">MNKKISLHSSSGPVKKTGSVEFQIYHLTNQVIKLTSHLKQHSKDYSSQRGLWKMLGKRKRLLVYLSKNDINCYENLINKLGIRGLKIR</sequence>
<reference key="1">
    <citation type="journal article" date="2007" name="Am. Fern J.">
        <title>The complete plastid genome sequence of Angiopteris evecta (G. Forst.) Hoffm. (Marattiaceae).</title>
        <authorList>
            <person name="Roper J.M."/>
            <person name="Hansen S.K."/>
            <person name="Wolf P.G."/>
            <person name="Karol K.G."/>
            <person name="Mandoli D.F."/>
            <person name="Everett K.D.E."/>
            <person name="Kuehl J.V."/>
            <person name="Boore J.L."/>
        </authorList>
    </citation>
    <scope>NUCLEOTIDE SEQUENCE [LARGE SCALE GENOMIC DNA]</scope>
</reference>
<feature type="chain" id="PRO_0000354236" description="Small ribosomal subunit protein uS15c">
    <location>
        <begin position="1"/>
        <end position="88"/>
    </location>
</feature>
<name>RR15_ANGEV</name>
<accession>A2T390</accession>
<proteinExistence type="inferred from homology"/>
<keyword id="KW-0150">Chloroplast</keyword>
<keyword id="KW-0934">Plastid</keyword>
<keyword id="KW-0687">Ribonucleoprotein</keyword>
<keyword id="KW-0689">Ribosomal protein</keyword>